<reference key="1">
    <citation type="journal article" date="2007" name="Nat. Biotechnol.">
        <title>Comparative analysis of the complete genome sequence of the plant growth-promoting bacterium Bacillus amyloliquefaciens FZB42.</title>
        <authorList>
            <person name="Chen X.H."/>
            <person name="Koumoutsi A."/>
            <person name="Scholz R."/>
            <person name="Eisenreich A."/>
            <person name="Schneider K."/>
            <person name="Heinemeyer I."/>
            <person name="Morgenstern B."/>
            <person name="Voss B."/>
            <person name="Hess W.R."/>
            <person name="Reva O."/>
            <person name="Junge H."/>
            <person name="Voigt B."/>
            <person name="Jungblut P.R."/>
            <person name="Vater J."/>
            <person name="Suessmuth R."/>
            <person name="Liesegang H."/>
            <person name="Strittmatter A."/>
            <person name="Gottschalk G."/>
            <person name="Borriss R."/>
        </authorList>
    </citation>
    <scope>NUCLEOTIDE SEQUENCE [LARGE SCALE GENOMIC DNA]</scope>
    <source>
        <strain>DSM 23117 / BGSC 10A6 / LMG 26770 / FZB42</strain>
    </source>
</reference>
<keyword id="KW-1005">Bacterial flagellum biogenesis</keyword>
<keyword id="KW-0143">Chaperone</keyword>
<keyword id="KW-0963">Cytoplasm</keyword>
<keyword id="KW-0810">Translation regulation</keyword>
<name>FLIW_BACVZ</name>
<gene>
    <name evidence="1" type="primary">fliW</name>
    <name type="ordered locus">RBAM_032530</name>
</gene>
<feature type="chain" id="PRO_1000065807" description="Flagellar assembly factor FliW">
    <location>
        <begin position="1"/>
        <end position="143"/>
    </location>
</feature>
<proteinExistence type="inferred from homology"/>
<evidence type="ECO:0000255" key="1">
    <source>
        <dbReference type="HAMAP-Rule" id="MF_01185"/>
    </source>
</evidence>
<comment type="function">
    <text evidence="1">Acts as an anti-CsrA protein, binds CsrA and prevents it from repressing translation of its target genes, one of which is flagellin. Binds to flagellin and participates in the assembly of the flagellum.</text>
</comment>
<comment type="subunit">
    <text evidence="1">Interacts with translational regulator CsrA and flagellin(s).</text>
</comment>
<comment type="subcellular location">
    <subcellularLocation>
        <location evidence="1">Cytoplasm</location>
    </subcellularLocation>
</comment>
<comment type="similarity">
    <text evidence="1">Belongs to the FliW family.</text>
</comment>
<accession>A7Z9A7</accession>
<sequence>MIIKTKYHGEIRIDEGQIISFENGLPGFNDETQFVVLPLSEDSPFLALQSVKQEHIAFIVASPFIFFKGYEFDIDHATLELLHIEDIEDVEVMAILTLEEPFENTTANLKAPIIVNKKEMKAKQIILHDASYETKHLIGGGSC</sequence>
<organism>
    <name type="scientific">Bacillus velezensis (strain DSM 23117 / BGSC 10A6 / LMG 26770 / FZB42)</name>
    <name type="common">Bacillus amyloliquefaciens subsp. plantarum</name>
    <dbReference type="NCBI Taxonomy" id="326423"/>
    <lineage>
        <taxon>Bacteria</taxon>
        <taxon>Bacillati</taxon>
        <taxon>Bacillota</taxon>
        <taxon>Bacilli</taxon>
        <taxon>Bacillales</taxon>
        <taxon>Bacillaceae</taxon>
        <taxon>Bacillus</taxon>
        <taxon>Bacillus amyloliquefaciens group</taxon>
    </lineage>
</organism>
<dbReference type="EMBL" id="CP000560">
    <property type="protein sequence ID" value="ABS75583.1"/>
    <property type="molecule type" value="Genomic_DNA"/>
</dbReference>
<dbReference type="RefSeq" id="WP_007407475.1">
    <property type="nucleotide sequence ID" value="NC_009725.2"/>
</dbReference>
<dbReference type="SMR" id="A7Z9A7"/>
<dbReference type="GeneID" id="93082398"/>
<dbReference type="KEGG" id="bay:RBAM_032530"/>
<dbReference type="HOGENOM" id="CLU_112356_0_2_9"/>
<dbReference type="Proteomes" id="UP000001120">
    <property type="component" value="Chromosome"/>
</dbReference>
<dbReference type="GO" id="GO:0005737">
    <property type="term" value="C:cytoplasm"/>
    <property type="evidence" value="ECO:0007669"/>
    <property type="project" value="UniProtKB-SubCell"/>
</dbReference>
<dbReference type="GO" id="GO:0044780">
    <property type="term" value="P:bacterial-type flagellum assembly"/>
    <property type="evidence" value="ECO:0007669"/>
    <property type="project" value="UniProtKB-UniRule"/>
</dbReference>
<dbReference type="GO" id="GO:0006417">
    <property type="term" value="P:regulation of translation"/>
    <property type="evidence" value="ECO:0007669"/>
    <property type="project" value="UniProtKB-KW"/>
</dbReference>
<dbReference type="Gene3D" id="2.30.290.10">
    <property type="entry name" value="BH3618-like"/>
    <property type="match status" value="1"/>
</dbReference>
<dbReference type="HAMAP" id="MF_01185">
    <property type="entry name" value="FliW"/>
    <property type="match status" value="1"/>
</dbReference>
<dbReference type="InterPro" id="IPR003775">
    <property type="entry name" value="Flagellar_assembly_factor_FliW"/>
</dbReference>
<dbReference type="InterPro" id="IPR024046">
    <property type="entry name" value="Flagellar_assmbl_FliW_dom_sf"/>
</dbReference>
<dbReference type="NCBIfam" id="NF009793">
    <property type="entry name" value="PRK13285.1-1"/>
    <property type="match status" value="1"/>
</dbReference>
<dbReference type="PANTHER" id="PTHR39190">
    <property type="entry name" value="FLAGELLAR ASSEMBLY FACTOR FLIW"/>
    <property type="match status" value="1"/>
</dbReference>
<dbReference type="PANTHER" id="PTHR39190:SF1">
    <property type="entry name" value="FLAGELLAR ASSEMBLY FACTOR FLIW"/>
    <property type="match status" value="1"/>
</dbReference>
<dbReference type="Pfam" id="PF02623">
    <property type="entry name" value="FliW"/>
    <property type="match status" value="1"/>
</dbReference>
<dbReference type="SUPFAM" id="SSF141457">
    <property type="entry name" value="BH3618-like"/>
    <property type="match status" value="1"/>
</dbReference>
<protein>
    <recommendedName>
        <fullName evidence="1">Flagellar assembly factor FliW</fullName>
    </recommendedName>
</protein>